<gene>
    <name type="primary">yqfX</name>
    <name type="ordered locus">BSU25080</name>
</gene>
<organism>
    <name type="scientific">Bacillus subtilis (strain 168)</name>
    <dbReference type="NCBI Taxonomy" id="224308"/>
    <lineage>
        <taxon>Bacteria</taxon>
        <taxon>Bacillati</taxon>
        <taxon>Bacillota</taxon>
        <taxon>Bacilli</taxon>
        <taxon>Bacillales</taxon>
        <taxon>Bacillaceae</taxon>
        <taxon>Bacillus</taxon>
    </lineage>
</organism>
<protein>
    <recommendedName>
        <fullName>Uncharacterized protein YqfX</fullName>
    </recommendedName>
</protein>
<keyword id="KW-1003">Cell membrane</keyword>
<keyword id="KW-0472">Membrane</keyword>
<keyword id="KW-1185">Reference proteome</keyword>
<keyword id="KW-0812">Transmembrane</keyword>
<keyword id="KW-1133">Transmembrane helix</keyword>
<evidence type="ECO:0000255" key="1"/>
<evidence type="ECO:0000256" key="2">
    <source>
        <dbReference type="SAM" id="MobiDB-lite"/>
    </source>
</evidence>
<evidence type="ECO:0000305" key="3"/>
<dbReference type="EMBL" id="D84432">
    <property type="protein sequence ID" value="BAA12501.1"/>
    <property type="molecule type" value="Genomic_DNA"/>
</dbReference>
<dbReference type="EMBL" id="AL009126">
    <property type="protein sequence ID" value="CAB14438.1"/>
    <property type="molecule type" value="Genomic_DNA"/>
</dbReference>
<dbReference type="PIR" id="B69955">
    <property type="entry name" value="B69955"/>
</dbReference>
<dbReference type="RefSeq" id="NP_390387.1">
    <property type="nucleotide sequence ID" value="NC_000964.3"/>
</dbReference>
<dbReference type="RefSeq" id="WP_010886568.1">
    <property type="nucleotide sequence ID" value="NZ_OZ025638.1"/>
</dbReference>
<dbReference type="SMR" id="P54481"/>
<dbReference type="FunCoup" id="P54481">
    <property type="interactions" value="19"/>
</dbReference>
<dbReference type="STRING" id="224308.BSU25080"/>
<dbReference type="PaxDb" id="224308-BSU25080"/>
<dbReference type="EnsemblBacteria" id="CAB14438">
    <property type="protein sequence ID" value="CAB14438"/>
    <property type="gene ID" value="BSU_25080"/>
</dbReference>
<dbReference type="GeneID" id="937973"/>
<dbReference type="KEGG" id="bsu:BSU25080"/>
<dbReference type="PATRIC" id="fig|224308.43.peg.2615"/>
<dbReference type="eggNOG" id="COG4709">
    <property type="taxonomic scope" value="Bacteria"/>
</dbReference>
<dbReference type="InParanoid" id="P54481"/>
<dbReference type="OrthoDB" id="2943217at2"/>
<dbReference type="BioCyc" id="BSUB:BSU25080-MONOMER"/>
<dbReference type="Proteomes" id="UP000001570">
    <property type="component" value="Chromosome"/>
</dbReference>
<dbReference type="GO" id="GO:0005886">
    <property type="term" value="C:plasma membrane"/>
    <property type="evidence" value="ECO:0007669"/>
    <property type="project" value="UniProtKB-SubCell"/>
</dbReference>
<dbReference type="InterPro" id="IPR055338">
    <property type="entry name" value="YqfX-like"/>
</dbReference>
<dbReference type="PANTHER" id="PTHR40040:SF1">
    <property type="entry name" value="MEMBRANE PROTEIN"/>
    <property type="match status" value="1"/>
</dbReference>
<dbReference type="PANTHER" id="PTHR40040">
    <property type="entry name" value="SMALL HYDROPHOBIC PROTEIN-RELATED"/>
    <property type="match status" value="1"/>
</dbReference>
<name>YQFX_BACSU</name>
<comment type="subcellular location">
    <subcellularLocation>
        <location evidence="3">Cell membrane</location>
        <topology evidence="3">Multi-pass membrane protein</topology>
    </subcellularLocation>
</comment>
<feature type="chain" id="PRO_0000049802" description="Uncharacterized protein YqfX">
    <location>
        <begin position="1"/>
        <end position="129"/>
    </location>
</feature>
<feature type="transmembrane region" description="Helical" evidence="1">
    <location>
        <begin position="78"/>
        <end position="98"/>
    </location>
</feature>
<feature type="transmembrane region" description="Helical" evidence="1">
    <location>
        <begin position="109"/>
        <end position="129"/>
    </location>
</feature>
<feature type="region of interest" description="Disordered" evidence="2">
    <location>
        <begin position="44"/>
        <end position="63"/>
    </location>
</feature>
<feature type="compositionally biased region" description="Basic and acidic residues" evidence="2">
    <location>
        <begin position="46"/>
        <end position="58"/>
    </location>
</feature>
<sequence>MKVANDYEKRDNNSYYVDHGSEGTNITRDNDGFFEETAAEIAEPYRAADRSNDQDNDRSGGNVNEGRGIGYIALALSIISLFVLPVLLGAAGIIVGYIARRRGAQGLGAWAMGIGVVSLVLGIFIIPFF</sequence>
<reference key="1">
    <citation type="journal article" date="1996" name="Microbiology">
        <title>Systematic sequencing of the 283 kb 210 degrees-232 degrees region of the Bacillus subtilis genome containing the skin element and many sporulation genes.</title>
        <authorList>
            <person name="Mizuno M."/>
            <person name="Masuda S."/>
            <person name="Takemaru K."/>
            <person name="Hosono S."/>
            <person name="Sato T."/>
            <person name="Takeuchi M."/>
            <person name="Kobayashi Y."/>
        </authorList>
    </citation>
    <scope>NUCLEOTIDE SEQUENCE [GENOMIC DNA]</scope>
    <source>
        <strain>168 / JH642</strain>
    </source>
</reference>
<reference key="2">
    <citation type="journal article" date="1997" name="Nature">
        <title>The complete genome sequence of the Gram-positive bacterium Bacillus subtilis.</title>
        <authorList>
            <person name="Kunst F."/>
            <person name="Ogasawara N."/>
            <person name="Moszer I."/>
            <person name="Albertini A.M."/>
            <person name="Alloni G."/>
            <person name="Azevedo V."/>
            <person name="Bertero M.G."/>
            <person name="Bessieres P."/>
            <person name="Bolotin A."/>
            <person name="Borchert S."/>
            <person name="Borriss R."/>
            <person name="Boursier L."/>
            <person name="Brans A."/>
            <person name="Braun M."/>
            <person name="Brignell S.C."/>
            <person name="Bron S."/>
            <person name="Brouillet S."/>
            <person name="Bruschi C.V."/>
            <person name="Caldwell B."/>
            <person name="Capuano V."/>
            <person name="Carter N.M."/>
            <person name="Choi S.-K."/>
            <person name="Codani J.-J."/>
            <person name="Connerton I.F."/>
            <person name="Cummings N.J."/>
            <person name="Daniel R.A."/>
            <person name="Denizot F."/>
            <person name="Devine K.M."/>
            <person name="Duesterhoeft A."/>
            <person name="Ehrlich S.D."/>
            <person name="Emmerson P.T."/>
            <person name="Entian K.-D."/>
            <person name="Errington J."/>
            <person name="Fabret C."/>
            <person name="Ferrari E."/>
            <person name="Foulger D."/>
            <person name="Fritz C."/>
            <person name="Fujita M."/>
            <person name="Fujita Y."/>
            <person name="Fuma S."/>
            <person name="Galizzi A."/>
            <person name="Galleron N."/>
            <person name="Ghim S.-Y."/>
            <person name="Glaser P."/>
            <person name="Goffeau A."/>
            <person name="Golightly E.J."/>
            <person name="Grandi G."/>
            <person name="Guiseppi G."/>
            <person name="Guy B.J."/>
            <person name="Haga K."/>
            <person name="Haiech J."/>
            <person name="Harwood C.R."/>
            <person name="Henaut A."/>
            <person name="Hilbert H."/>
            <person name="Holsappel S."/>
            <person name="Hosono S."/>
            <person name="Hullo M.-F."/>
            <person name="Itaya M."/>
            <person name="Jones L.-M."/>
            <person name="Joris B."/>
            <person name="Karamata D."/>
            <person name="Kasahara Y."/>
            <person name="Klaerr-Blanchard M."/>
            <person name="Klein C."/>
            <person name="Kobayashi Y."/>
            <person name="Koetter P."/>
            <person name="Koningstein G."/>
            <person name="Krogh S."/>
            <person name="Kumano M."/>
            <person name="Kurita K."/>
            <person name="Lapidus A."/>
            <person name="Lardinois S."/>
            <person name="Lauber J."/>
            <person name="Lazarevic V."/>
            <person name="Lee S.-M."/>
            <person name="Levine A."/>
            <person name="Liu H."/>
            <person name="Masuda S."/>
            <person name="Mauel C."/>
            <person name="Medigue C."/>
            <person name="Medina N."/>
            <person name="Mellado R.P."/>
            <person name="Mizuno M."/>
            <person name="Moestl D."/>
            <person name="Nakai S."/>
            <person name="Noback M."/>
            <person name="Noone D."/>
            <person name="O'Reilly M."/>
            <person name="Ogawa K."/>
            <person name="Ogiwara A."/>
            <person name="Oudega B."/>
            <person name="Park S.-H."/>
            <person name="Parro V."/>
            <person name="Pohl T.M."/>
            <person name="Portetelle D."/>
            <person name="Porwollik S."/>
            <person name="Prescott A.M."/>
            <person name="Presecan E."/>
            <person name="Pujic P."/>
            <person name="Purnelle B."/>
            <person name="Rapoport G."/>
            <person name="Rey M."/>
            <person name="Reynolds S."/>
            <person name="Rieger M."/>
            <person name="Rivolta C."/>
            <person name="Rocha E."/>
            <person name="Roche B."/>
            <person name="Rose M."/>
            <person name="Sadaie Y."/>
            <person name="Sato T."/>
            <person name="Scanlan E."/>
            <person name="Schleich S."/>
            <person name="Schroeter R."/>
            <person name="Scoffone F."/>
            <person name="Sekiguchi J."/>
            <person name="Sekowska A."/>
            <person name="Seror S.J."/>
            <person name="Serror P."/>
            <person name="Shin B.-S."/>
            <person name="Soldo B."/>
            <person name="Sorokin A."/>
            <person name="Tacconi E."/>
            <person name="Takagi T."/>
            <person name="Takahashi H."/>
            <person name="Takemaru K."/>
            <person name="Takeuchi M."/>
            <person name="Tamakoshi A."/>
            <person name="Tanaka T."/>
            <person name="Terpstra P."/>
            <person name="Tognoni A."/>
            <person name="Tosato V."/>
            <person name="Uchiyama S."/>
            <person name="Vandenbol M."/>
            <person name="Vannier F."/>
            <person name="Vassarotti A."/>
            <person name="Viari A."/>
            <person name="Wambutt R."/>
            <person name="Wedler E."/>
            <person name="Wedler H."/>
            <person name="Weitzenegger T."/>
            <person name="Winters P."/>
            <person name="Wipat A."/>
            <person name="Yamamoto H."/>
            <person name="Yamane K."/>
            <person name="Yasumoto K."/>
            <person name="Yata K."/>
            <person name="Yoshida K."/>
            <person name="Yoshikawa H.-F."/>
            <person name="Zumstein E."/>
            <person name="Yoshikawa H."/>
            <person name="Danchin A."/>
        </authorList>
    </citation>
    <scope>NUCLEOTIDE SEQUENCE [LARGE SCALE GENOMIC DNA]</scope>
    <source>
        <strain>168</strain>
    </source>
</reference>
<accession>P54481</accession>
<proteinExistence type="predicted"/>